<accession>O46688</accession>
<comment type="function">
    <molecule>Somatostatin-14</molecule>
    <text evidence="5">Inhibits the secretion of pituitary hormones, including that of growth hormone/somatotropin (GH1), PRL, ACTH, luteinizing hormone (LH) and TSH. Also impairs ghrelin- and GnRH-stimulated secretion of GH1 and LH; the inhibition of ghrelin-stimulated secretion of GH1 can be further increased by neuronostatin.</text>
</comment>
<comment type="function">
    <molecule>Neuronostatin</molecule>
    <text evidence="3 4 5">May enhance low-glucose-induced glucagon release by pancreatic alpha cells. This effect may be mediated by binding to GPR107 and PKA activation (By similarity). May regulate cardiac contractile function (By similarity). May compromise cardiomyocyte viability. In the central nervous system, may impair memory retention and may affect hippocampal excitability. May also have anxiolytic and anorexigenic effects. May play a role in arterial pressure regulation (By similarity). May inhibit basal, but not ghrelin- or GnRH-stimulated secretion of GH1 or LH, but does not affect the release of other pituitary hormones, including PRL, ACTH, FSH or TSH. Potentiates inhibitory action of somatostatin on ghrelin-stimulated secretion of GH1, but not that on GnRH-stimulated secretion of LH (By similarity).</text>
</comment>
<comment type="subcellular location">
    <subcellularLocation>
        <location evidence="4">Secreted</location>
    </subcellularLocation>
</comment>
<comment type="PTM">
    <text evidence="4">C-terminal amidation of the neuronostatin peptide is required for its biological activity, including for the regulation of mean arterial pressure.</text>
</comment>
<comment type="similarity">
    <text evidence="7">Belongs to the somatostatin family.</text>
</comment>
<keyword id="KW-0027">Amidation</keyword>
<keyword id="KW-0165">Cleavage on pair of basic residues</keyword>
<keyword id="KW-1015">Disulfide bond</keyword>
<keyword id="KW-0372">Hormone</keyword>
<keyword id="KW-1185">Reference proteome</keyword>
<keyword id="KW-0964">Secreted</keyword>
<keyword id="KW-0732">Signal</keyword>
<reference key="1">
    <citation type="journal article" date="1998" name="Peptides">
        <title>Localization of the preprosomatostatin-mRNA by in situ hybridization in the ewe hypothalamus.</title>
        <authorList>
            <person name="Bruneau G."/>
            <person name="Tillet Y."/>
        </authorList>
    </citation>
    <scope>NUCLEOTIDE SEQUENCE [MRNA]</scope>
    <source>
        <strain>Ile de France</strain>
    </source>
</reference>
<protein>
    <recommendedName>
        <fullName>Somatostatin</fullName>
    </recommendedName>
    <component>
        <recommendedName>
            <fullName>Somatostatin-28</fullName>
        </recommendedName>
    </component>
    <component>
        <recommendedName>
            <fullName>Somatostatin-14</fullName>
        </recommendedName>
    </component>
    <component>
        <recommendedName>
            <fullName>Neuronostatin</fullName>
            <shortName>NST</shortName>
        </recommendedName>
    </component>
</protein>
<evidence type="ECO:0000250" key="1"/>
<evidence type="ECO:0000250" key="2">
    <source>
        <dbReference type="UniProtKB" id="P01168"/>
    </source>
</evidence>
<evidence type="ECO:0000250" key="3">
    <source>
        <dbReference type="UniProtKB" id="P60041"/>
    </source>
</evidence>
<evidence type="ECO:0000250" key="4">
    <source>
        <dbReference type="UniProtKB" id="P60042"/>
    </source>
</evidence>
<evidence type="ECO:0000250" key="5">
    <source>
        <dbReference type="UniProtKB" id="P61278"/>
    </source>
</evidence>
<evidence type="ECO:0000256" key="6">
    <source>
        <dbReference type="SAM" id="MobiDB-lite"/>
    </source>
</evidence>
<evidence type="ECO:0000305" key="7"/>
<sequence length="116" mass="12689">MLSCRLQCALAALSIVLALGGVTGAPSDPRLRQFLQKSLAAAAGKQELAKYFLAELLSEPNQTENDALEPEDLSQAAEQDEMRLELQRSANSNPAMAPRERKAGCKNFFWKTFTSC</sequence>
<name>SMS_SHEEP</name>
<dbReference type="EMBL" id="AF031488">
    <property type="protein sequence ID" value="AAC04697.1"/>
    <property type="molecule type" value="mRNA"/>
</dbReference>
<dbReference type="EMBL" id="Y15267">
    <property type="protein sequence ID" value="CAA75556.1"/>
    <property type="molecule type" value="mRNA"/>
</dbReference>
<dbReference type="PIR" id="A61322">
    <property type="entry name" value="A61322"/>
</dbReference>
<dbReference type="RefSeq" id="NP_001009196.1">
    <property type="nucleotide sequence ID" value="NM_001009196.1"/>
</dbReference>
<dbReference type="STRING" id="9940.ENSOARP00000022014"/>
<dbReference type="PaxDb" id="9940-ENSOARP00000022014"/>
<dbReference type="Ensembl" id="ENSOART00025029271">
    <property type="protein sequence ID" value="ENSOARP00025014259"/>
    <property type="gene ID" value="ENSOARG00025017849"/>
</dbReference>
<dbReference type="Ensembl" id="ENSOART00185027191">
    <property type="protein sequence ID" value="ENSOARP00185012504"/>
    <property type="gene ID" value="ENSOARG00185016863"/>
</dbReference>
<dbReference type="Ensembl" id="ENSOART00215028986">
    <property type="protein sequence ID" value="ENSOARP00215015169"/>
    <property type="gene ID" value="ENSOARG00215017332"/>
</dbReference>
<dbReference type="Ensembl" id="ENSOART00220049387">
    <property type="protein sequence ID" value="ENSOARP00220026498"/>
    <property type="gene ID" value="ENSOARG00220029645"/>
</dbReference>
<dbReference type="Ensembl" id="ENSOART00225067809">
    <property type="protein sequence ID" value="ENSOARP00225034604"/>
    <property type="gene ID" value="ENSOARG00225040860"/>
</dbReference>
<dbReference type="Ensembl" id="ENSOART00260010783">
    <property type="protein sequence ID" value="ENSOARP00260005373"/>
    <property type="gene ID" value="ENSOARG00260006652"/>
</dbReference>
<dbReference type="GeneID" id="443006"/>
<dbReference type="KEGG" id="oas:443006"/>
<dbReference type="CTD" id="6750"/>
<dbReference type="eggNOG" id="ENOG502S11K">
    <property type="taxonomic scope" value="Eukaryota"/>
</dbReference>
<dbReference type="HOGENOM" id="CLU_124515_1_1_1"/>
<dbReference type="OMA" id="AEQDDMR"/>
<dbReference type="OrthoDB" id="9948948at2759"/>
<dbReference type="Proteomes" id="UP000002356">
    <property type="component" value="Chromosome 1"/>
</dbReference>
<dbReference type="Bgee" id="ENSOARG00000020492">
    <property type="expression patterns" value="Expressed in pylorus and 18 other cell types or tissues"/>
</dbReference>
<dbReference type="GO" id="GO:0005829">
    <property type="term" value="C:cytosol"/>
    <property type="evidence" value="ECO:0007669"/>
    <property type="project" value="Ensembl"/>
</dbReference>
<dbReference type="GO" id="GO:0005615">
    <property type="term" value="C:extracellular space"/>
    <property type="evidence" value="ECO:0007669"/>
    <property type="project" value="Ensembl"/>
</dbReference>
<dbReference type="GO" id="GO:0098982">
    <property type="term" value="C:GABA-ergic synapse"/>
    <property type="evidence" value="ECO:0007669"/>
    <property type="project" value="Ensembl"/>
</dbReference>
<dbReference type="GO" id="GO:0005179">
    <property type="term" value="F:hormone activity"/>
    <property type="evidence" value="ECO:0007669"/>
    <property type="project" value="UniProtKB-KW"/>
</dbReference>
<dbReference type="GO" id="GO:0030334">
    <property type="term" value="P:regulation of cell migration"/>
    <property type="evidence" value="ECO:0000250"/>
    <property type="project" value="AgBase"/>
</dbReference>
<dbReference type="GO" id="GO:0099072">
    <property type="term" value="P:regulation of postsynaptic membrane neurotransmitter receptor levels"/>
    <property type="evidence" value="ECO:0007669"/>
    <property type="project" value="Ensembl"/>
</dbReference>
<dbReference type="GO" id="GO:0038170">
    <property type="term" value="P:somatostatin signaling pathway"/>
    <property type="evidence" value="ECO:0007669"/>
    <property type="project" value="Ensembl"/>
</dbReference>
<dbReference type="InterPro" id="IPR004250">
    <property type="entry name" value="Somatostatin"/>
</dbReference>
<dbReference type="InterPro" id="IPR018142">
    <property type="entry name" value="Somatostatin/Cortistatin_C"/>
</dbReference>
<dbReference type="PANTHER" id="PTHR10558">
    <property type="entry name" value="SOMATOSTATIN"/>
    <property type="match status" value="1"/>
</dbReference>
<dbReference type="PANTHER" id="PTHR10558:SF2">
    <property type="entry name" value="SOMATOSTATIN"/>
    <property type="match status" value="1"/>
</dbReference>
<dbReference type="Pfam" id="PF03002">
    <property type="entry name" value="Somatostatin"/>
    <property type="match status" value="1"/>
</dbReference>
<dbReference type="PIRSF" id="PIRSF001814">
    <property type="entry name" value="Somatostatin"/>
    <property type="match status" value="1"/>
</dbReference>
<gene>
    <name type="primary">SST</name>
</gene>
<proteinExistence type="inferred from homology"/>
<feature type="signal peptide" evidence="1">
    <location>
        <begin position="1"/>
        <end position="24"/>
    </location>
</feature>
<feature type="propeptide" id="PRO_0000033103" evidence="1">
    <location>
        <begin position="25"/>
        <end position="88"/>
    </location>
</feature>
<feature type="peptide" id="PRO_0000447380" description="Neuronostatin" evidence="5">
    <location>
        <begin position="31"/>
        <end position="43"/>
    </location>
</feature>
<feature type="peptide" id="PRO_0000033104" description="Somatostatin-28">
    <location>
        <begin position="89"/>
        <end position="116"/>
    </location>
</feature>
<feature type="peptide" id="PRO_0000033105" description="Somatostatin-14">
    <location>
        <begin position="103"/>
        <end position="116"/>
    </location>
</feature>
<feature type="region of interest" description="Disordered" evidence="6">
    <location>
        <begin position="62"/>
        <end position="99"/>
    </location>
</feature>
<feature type="modified residue" description="Alanine amide" evidence="2">
    <location>
        <position position="43"/>
    </location>
</feature>
<feature type="disulfide bond" evidence="1">
    <location>
        <begin position="105"/>
        <end position="116"/>
    </location>
</feature>
<organism>
    <name type="scientific">Ovis aries</name>
    <name type="common">Sheep</name>
    <dbReference type="NCBI Taxonomy" id="9940"/>
    <lineage>
        <taxon>Eukaryota</taxon>
        <taxon>Metazoa</taxon>
        <taxon>Chordata</taxon>
        <taxon>Craniata</taxon>
        <taxon>Vertebrata</taxon>
        <taxon>Euteleostomi</taxon>
        <taxon>Mammalia</taxon>
        <taxon>Eutheria</taxon>
        <taxon>Laurasiatheria</taxon>
        <taxon>Artiodactyla</taxon>
        <taxon>Ruminantia</taxon>
        <taxon>Pecora</taxon>
        <taxon>Bovidae</taxon>
        <taxon>Caprinae</taxon>
        <taxon>Ovis</taxon>
    </lineage>
</organism>